<dbReference type="EMBL" id="CP000112">
    <property type="protein sequence ID" value="ABB38893.1"/>
    <property type="molecule type" value="Genomic_DNA"/>
</dbReference>
<dbReference type="RefSeq" id="WP_011367997.1">
    <property type="nucleotide sequence ID" value="NC_007519.1"/>
</dbReference>
<dbReference type="SMR" id="Q30ZK3"/>
<dbReference type="STRING" id="207559.Dde_2096"/>
<dbReference type="KEGG" id="dde:Dde_2096"/>
<dbReference type="eggNOG" id="COG0556">
    <property type="taxonomic scope" value="Bacteria"/>
</dbReference>
<dbReference type="HOGENOM" id="CLU_009621_2_1_7"/>
<dbReference type="Proteomes" id="UP000002710">
    <property type="component" value="Chromosome"/>
</dbReference>
<dbReference type="GO" id="GO:0005737">
    <property type="term" value="C:cytoplasm"/>
    <property type="evidence" value="ECO:0007669"/>
    <property type="project" value="UniProtKB-SubCell"/>
</dbReference>
<dbReference type="GO" id="GO:0009380">
    <property type="term" value="C:excinuclease repair complex"/>
    <property type="evidence" value="ECO:0007669"/>
    <property type="project" value="InterPro"/>
</dbReference>
<dbReference type="GO" id="GO:0005524">
    <property type="term" value="F:ATP binding"/>
    <property type="evidence" value="ECO:0007669"/>
    <property type="project" value="UniProtKB-UniRule"/>
</dbReference>
<dbReference type="GO" id="GO:0016887">
    <property type="term" value="F:ATP hydrolysis activity"/>
    <property type="evidence" value="ECO:0007669"/>
    <property type="project" value="InterPro"/>
</dbReference>
<dbReference type="GO" id="GO:0003677">
    <property type="term" value="F:DNA binding"/>
    <property type="evidence" value="ECO:0007669"/>
    <property type="project" value="UniProtKB-UniRule"/>
</dbReference>
<dbReference type="GO" id="GO:0009381">
    <property type="term" value="F:excinuclease ABC activity"/>
    <property type="evidence" value="ECO:0007669"/>
    <property type="project" value="UniProtKB-UniRule"/>
</dbReference>
<dbReference type="GO" id="GO:0006289">
    <property type="term" value="P:nucleotide-excision repair"/>
    <property type="evidence" value="ECO:0007669"/>
    <property type="project" value="UniProtKB-UniRule"/>
</dbReference>
<dbReference type="GO" id="GO:0009432">
    <property type="term" value="P:SOS response"/>
    <property type="evidence" value="ECO:0007669"/>
    <property type="project" value="UniProtKB-UniRule"/>
</dbReference>
<dbReference type="CDD" id="cd17916">
    <property type="entry name" value="DEXHc_UvrB"/>
    <property type="match status" value="1"/>
</dbReference>
<dbReference type="CDD" id="cd18790">
    <property type="entry name" value="SF2_C_UvrB"/>
    <property type="match status" value="1"/>
</dbReference>
<dbReference type="Gene3D" id="3.40.50.300">
    <property type="entry name" value="P-loop containing nucleotide triphosphate hydrolases"/>
    <property type="match status" value="3"/>
</dbReference>
<dbReference type="Gene3D" id="4.10.860.10">
    <property type="entry name" value="UVR domain"/>
    <property type="match status" value="1"/>
</dbReference>
<dbReference type="HAMAP" id="MF_00204">
    <property type="entry name" value="UvrB"/>
    <property type="match status" value="1"/>
</dbReference>
<dbReference type="InterPro" id="IPR006935">
    <property type="entry name" value="Helicase/UvrB_N"/>
</dbReference>
<dbReference type="InterPro" id="IPR014001">
    <property type="entry name" value="Helicase_ATP-bd"/>
</dbReference>
<dbReference type="InterPro" id="IPR001650">
    <property type="entry name" value="Helicase_C-like"/>
</dbReference>
<dbReference type="InterPro" id="IPR027417">
    <property type="entry name" value="P-loop_NTPase"/>
</dbReference>
<dbReference type="InterPro" id="IPR001943">
    <property type="entry name" value="UVR_dom"/>
</dbReference>
<dbReference type="InterPro" id="IPR036876">
    <property type="entry name" value="UVR_dom_sf"/>
</dbReference>
<dbReference type="InterPro" id="IPR004807">
    <property type="entry name" value="UvrB"/>
</dbReference>
<dbReference type="InterPro" id="IPR041471">
    <property type="entry name" value="UvrB_inter"/>
</dbReference>
<dbReference type="InterPro" id="IPR024759">
    <property type="entry name" value="UvrB_YAD/RRR_dom"/>
</dbReference>
<dbReference type="NCBIfam" id="NF003673">
    <property type="entry name" value="PRK05298.1"/>
    <property type="match status" value="1"/>
</dbReference>
<dbReference type="NCBIfam" id="TIGR00631">
    <property type="entry name" value="uvrb"/>
    <property type="match status" value="1"/>
</dbReference>
<dbReference type="PANTHER" id="PTHR24029">
    <property type="entry name" value="UVRABC SYSTEM PROTEIN B"/>
    <property type="match status" value="1"/>
</dbReference>
<dbReference type="PANTHER" id="PTHR24029:SF0">
    <property type="entry name" value="UVRABC SYSTEM PROTEIN B"/>
    <property type="match status" value="1"/>
</dbReference>
<dbReference type="Pfam" id="PF00271">
    <property type="entry name" value="Helicase_C"/>
    <property type="match status" value="1"/>
</dbReference>
<dbReference type="Pfam" id="PF04851">
    <property type="entry name" value="ResIII"/>
    <property type="match status" value="1"/>
</dbReference>
<dbReference type="Pfam" id="PF02151">
    <property type="entry name" value="UVR"/>
    <property type="match status" value="1"/>
</dbReference>
<dbReference type="Pfam" id="PF12344">
    <property type="entry name" value="UvrB"/>
    <property type="match status" value="1"/>
</dbReference>
<dbReference type="Pfam" id="PF17757">
    <property type="entry name" value="UvrB_inter"/>
    <property type="match status" value="1"/>
</dbReference>
<dbReference type="SMART" id="SM00487">
    <property type="entry name" value="DEXDc"/>
    <property type="match status" value="1"/>
</dbReference>
<dbReference type="SMART" id="SM00490">
    <property type="entry name" value="HELICc"/>
    <property type="match status" value="1"/>
</dbReference>
<dbReference type="SUPFAM" id="SSF46600">
    <property type="entry name" value="C-terminal UvrC-binding domain of UvrB"/>
    <property type="match status" value="1"/>
</dbReference>
<dbReference type="SUPFAM" id="SSF52540">
    <property type="entry name" value="P-loop containing nucleoside triphosphate hydrolases"/>
    <property type="match status" value="2"/>
</dbReference>
<dbReference type="PROSITE" id="PS51192">
    <property type="entry name" value="HELICASE_ATP_BIND_1"/>
    <property type="match status" value="1"/>
</dbReference>
<dbReference type="PROSITE" id="PS51194">
    <property type="entry name" value="HELICASE_CTER"/>
    <property type="match status" value="1"/>
</dbReference>
<dbReference type="PROSITE" id="PS50151">
    <property type="entry name" value="UVR"/>
    <property type="match status" value="1"/>
</dbReference>
<feature type="chain" id="PRO_0000227310" description="UvrABC system protein B">
    <location>
        <begin position="1"/>
        <end position="682"/>
    </location>
</feature>
<feature type="domain" description="Helicase ATP-binding" evidence="1">
    <location>
        <begin position="27"/>
        <end position="414"/>
    </location>
</feature>
<feature type="domain" description="Helicase C-terminal" evidence="1">
    <location>
        <begin position="432"/>
        <end position="594"/>
    </location>
</feature>
<feature type="domain" description="UVR" evidence="1">
    <location>
        <begin position="642"/>
        <end position="677"/>
    </location>
</feature>
<feature type="region of interest" description="Disordered" evidence="2">
    <location>
        <begin position="609"/>
        <end position="628"/>
    </location>
</feature>
<feature type="short sequence motif" description="Beta-hairpin">
    <location>
        <begin position="93"/>
        <end position="116"/>
    </location>
</feature>
<feature type="binding site" evidence="1">
    <location>
        <begin position="40"/>
        <end position="47"/>
    </location>
    <ligand>
        <name>ATP</name>
        <dbReference type="ChEBI" id="CHEBI:30616"/>
    </ligand>
</feature>
<organism>
    <name type="scientific">Oleidesulfovibrio alaskensis (strain ATCC BAA-1058 / DSM 17464 / G20)</name>
    <name type="common">Desulfovibrio alaskensis</name>
    <dbReference type="NCBI Taxonomy" id="207559"/>
    <lineage>
        <taxon>Bacteria</taxon>
        <taxon>Pseudomonadati</taxon>
        <taxon>Thermodesulfobacteriota</taxon>
        <taxon>Desulfovibrionia</taxon>
        <taxon>Desulfovibrionales</taxon>
        <taxon>Desulfovibrionaceae</taxon>
        <taxon>Oleidesulfovibrio</taxon>
    </lineage>
</organism>
<evidence type="ECO:0000255" key="1">
    <source>
        <dbReference type="HAMAP-Rule" id="MF_00204"/>
    </source>
</evidence>
<evidence type="ECO:0000256" key="2">
    <source>
        <dbReference type="SAM" id="MobiDB-lite"/>
    </source>
</evidence>
<gene>
    <name evidence="1" type="primary">uvrB</name>
    <name type="ordered locus">Dde_2096</name>
</gene>
<comment type="function">
    <text evidence="1">The UvrABC repair system catalyzes the recognition and processing of DNA lesions. A damage recognition complex composed of 2 UvrA and 2 UvrB subunits scans DNA for abnormalities. Upon binding of the UvrA(2)B(2) complex to a putative damaged site, the DNA wraps around one UvrB monomer. DNA wrap is dependent on ATP binding by UvrB and probably causes local melting of the DNA helix, facilitating insertion of UvrB beta-hairpin between the DNA strands. Then UvrB probes one DNA strand for the presence of a lesion. If a lesion is found the UvrA subunits dissociate and the UvrB-DNA preincision complex is formed. This complex is subsequently bound by UvrC and the second UvrB is released. If no lesion is found, the DNA wraps around the other UvrB subunit that will check the other stand for damage.</text>
</comment>
<comment type="subunit">
    <text evidence="1">Forms a heterotetramer with UvrA during the search for lesions. Interacts with UvrC in an incision complex.</text>
</comment>
<comment type="subcellular location">
    <subcellularLocation>
        <location evidence="1">Cytoplasm</location>
    </subcellularLocation>
</comment>
<comment type="domain">
    <text evidence="1">The beta-hairpin motif is involved in DNA binding.</text>
</comment>
<comment type="similarity">
    <text evidence="1">Belongs to the UvrB family.</text>
</comment>
<reference key="1">
    <citation type="journal article" date="2011" name="J. Bacteriol.">
        <title>Complete genome sequence and updated annotation of Desulfovibrio alaskensis G20.</title>
        <authorList>
            <person name="Hauser L.J."/>
            <person name="Land M.L."/>
            <person name="Brown S.D."/>
            <person name="Larimer F."/>
            <person name="Keller K.L."/>
            <person name="Rapp-Giles B.J."/>
            <person name="Price M.N."/>
            <person name="Lin M."/>
            <person name="Bruce D.C."/>
            <person name="Detter J.C."/>
            <person name="Tapia R."/>
            <person name="Han C.S."/>
            <person name="Goodwin L.A."/>
            <person name="Cheng J.F."/>
            <person name="Pitluck S."/>
            <person name="Copeland A."/>
            <person name="Lucas S."/>
            <person name="Nolan M."/>
            <person name="Lapidus A.L."/>
            <person name="Palumbo A.V."/>
            <person name="Wall J.D."/>
        </authorList>
    </citation>
    <scope>NUCLEOTIDE SEQUENCE [LARGE SCALE GENOMIC DNA]</scope>
    <source>
        <strain>ATCC BAA-1058 / DSM 17464 / G20</strain>
    </source>
</reference>
<name>UVRB_OLEA2</name>
<proteinExistence type="inferred from homology"/>
<accession>Q30ZK3</accession>
<protein>
    <recommendedName>
        <fullName evidence="1">UvrABC system protein B</fullName>
        <shortName evidence="1">Protein UvrB</shortName>
    </recommendedName>
    <alternativeName>
        <fullName evidence="1">Excinuclease ABC subunit B</fullName>
    </alternativeName>
</protein>
<sequence>MQDSVFRIESEYVPRGDQPEAITQLSDNIRAGVAHQVLLGVTGSGKTFTMAHTIERCQRPALILAPNKTLAAQLYNEFRALFPHNAVEYFVSYYDYYQPEAYVPTSDTYIEKDSSINDNIDKLRHAATHALLTRRDVIIIASVSCIYGLGSPEYYAKMVIPVEAGQHMSMDSLIGRLVDVQYERNDYDFHRGTFRVRGDVLEVIPAYHHERALRLEFFGDEIDSIKEIDPLTGNVLGDVGKTVIYPASHYVSDRDNLNRAVSDIREELRLRLEEYRQGNRLVEAQRLEQRTMLDLEMIEEMGYCTGIENYSRHLDGRTAGEPPACLLDYFPDNFILFVDESHITVSQVGAMYKGDRSRKQTLVDFGFRLPSALDNRPLEFSEFEKRLNQVVYVSATPSRWELDRSEGIVVEQIIRPTGLLDPLTEVRPTKGQMEDLMTECRSRTARDERVLVTTLTKRMAEDLTEYLTSMGVSARYLHSDIDTMERMAIIQALRRKEFDVLVGINLLREGLDIPEVSLVAILDADKEGFLRSTGSLIQTFGRAARNVDGRVIMYADSVTRSMTAAMQETERRREKQRLYNEEHGIEPVSVRKSLETPFDTLYSDARSAAAKGRGKGRGRQAAPAQTAAEDTTAYGISAEELGGLIQRLEREMRESARDLEFEKAAELRDRIRMLRERLLQQD</sequence>
<keyword id="KW-0067">ATP-binding</keyword>
<keyword id="KW-0963">Cytoplasm</keyword>
<keyword id="KW-0227">DNA damage</keyword>
<keyword id="KW-0228">DNA excision</keyword>
<keyword id="KW-0234">DNA repair</keyword>
<keyword id="KW-0267">Excision nuclease</keyword>
<keyword id="KW-0547">Nucleotide-binding</keyword>
<keyword id="KW-1185">Reference proteome</keyword>
<keyword id="KW-0742">SOS response</keyword>